<dbReference type="EC" id="5.3.1.1" evidence="1"/>
<dbReference type="EMBL" id="BA000017">
    <property type="protein sequence ID" value="BAB56936.1"/>
    <property type="molecule type" value="Genomic_DNA"/>
</dbReference>
<dbReference type="RefSeq" id="WP_001260089.1">
    <property type="nucleotide sequence ID" value="NC_002758.2"/>
</dbReference>
<dbReference type="SMR" id="P68822"/>
<dbReference type="KEGG" id="sav:SAV0774"/>
<dbReference type="HOGENOM" id="CLU_024251_2_3_9"/>
<dbReference type="PhylomeDB" id="P68822"/>
<dbReference type="UniPathway" id="UPA00109">
    <property type="reaction ID" value="UER00189"/>
</dbReference>
<dbReference type="UniPathway" id="UPA00138"/>
<dbReference type="Proteomes" id="UP000002481">
    <property type="component" value="Chromosome"/>
</dbReference>
<dbReference type="GO" id="GO:0005829">
    <property type="term" value="C:cytosol"/>
    <property type="evidence" value="ECO:0007669"/>
    <property type="project" value="TreeGrafter"/>
</dbReference>
<dbReference type="GO" id="GO:0004807">
    <property type="term" value="F:triose-phosphate isomerase activity"/>
    <property type="evidence" value="ECO:0007669"/>
    <property type="project" value="UniProtKB-UniRule"/>
</dbReference>
<dbReference type="GO" id="GO:0006094">
    <property type="term" value="P:gluconeogenesis"/>
    <property type="evidence" value="ECO:0007669"/>
    <property type="project" value="UniProtKB-UniRule"/>
</dbReference>
<dbReference type="GO" id="GO:0046166">
    <property type="term" value="P:glyceraldehyde-3-phosphate biosynthetic process"/>
    <property type="evidence" value="ECO:0007669"/>
    <property type="project" value="TreeGrafter"/>
</dbReference>
<dbReference type="GO" id="GO:0019563">
    <property type="term" value="P:glycerol catabolic process"/>
    <property type="evidence" value="ECO:0007669"/>
    <property type="project" value="TreeGrafter"/>
</dbReference>
<dbReference type="GO" id="GO:0006096">
    <property type="term" value="P:glycolytic process"/>
    <property type="evidence" value="ECO:0007669"/>
    <property type="project" value="UniProtKB-UniRule"/>
</dbReference>
<dbReference type="CDD" id="cd00311">
    <property type="entry name" value="TIM"/>
    <property type="match status" value="1"/>
</dbReference>
<dbReference type="FunFam" id="3.20.20.70:FF:000016">
    <property type="entry name" value="Triosephosphate isomerase"/>
    <property type="match status" value="1"/>
</dbReference>
<dbReference type="Gene3D" id="3.20.20.70">
    <property type="entry name" value="Aldolase class I"/>
    <property type="match status" value="1"/>
</dbReference>
<dbReference type="HAMAP" id="MF_00147_B">
    <property type="entry name" value="TIM_B"/>
    <property type="match status" value="1"/>
</dbReference>
<dbReference type="InterPro" id="IPR013785">
    <property type="entry name" value="Aldolase_TIM"/>
</dbReference>
<dbReference type="InterPro" id="IPR035990">
    <property type="entry name" value="TIM_sf"/>
</dbReference>
<dbReference type="InterPro" id="IPR022896">
    <property type="entry name" value="TrioseP_Isoase_bac/euk"/>
</dbReference>
<dbReference type="InterPro" id="IPR000652">
    <property type="entry name" value="Triosephosphate_isomerase"/>
</dbReference>
<dbReference type="InterPro" id="IPR020861">
    <property type="entry name" value="Triosephosphate_isomerase_AS"/>
</dbReference>
<dbReference type="NCBIfam" id="TIGR00419">
    <property type="entry name" value="tim"/>
    <property type="match status" value="1"/>
</dbReference>
<dbReference type="PANTHER" id="PTHR21139">
    <property type="entry name" value="TRIOSEPHOSPHATE ISOMERASE"/>
    <property type="match status" value="1"/>
</dbReference>
<dbReference type="PANTHER" id="PTHR21139:SF42">
    <property type="entry name" value="TRIOSEPHOSPHATE ISOMERASE"/>
    <property type="match status" value="1"/>
</dbReference>
<dbReference type="Pfam" id="PF00121">
    <property type="entry name" value="TIM"/>
    <property type="match status" value="1"/>
</dbReference>
<dbReference type="SUPFAM" id="SSF51351">
    <property type="entry name" value="Triosephosphate isomerase (TIM)"/>
    <property type="match status" value="1"/>
</dbReference>
<dbReference type="PROSITE" id="PS00171">
    <property type="entry name" value="TIM_1"/>
    <property type="match status" value="1"/>
</dbReference>
<dbReference type="PROSITE" id="PS51440">
    <property type="entry name" value="TIM_2"/>
    <property type="match status" value="1"/>
</dbReference>
<protein>
    <recommendedName>
        <fullName evidence="1">Triosephosphate isomerase</fullName>
        <shortName evidence="1">TIM</shortName>
        <shortName evidence="1">TPI</shortName>
        <ecNumber evidence="1">5.3.1.1</ecNumber>
    </recommendedName>
    <alternativeName>
        <fullName evidence="1">Triose-phosphate isomerase</fullName>
    </alternativeName>
</protein>
<organism>
    <name type="scientific">Staphylococcus aureus (strain Mu50 / ATCC 700699)</name>
    <dbReference type="NCBI Taxonomy" id="158878"/>
    <lineage>
        <taxon>Bacteria</taxon>
        <taxon>Bacillati</taxon>
        <taxon>Bacillota</taxon>
        <taxon>Bacilli</taxon>
        <taxon>Bacillales</taxon>
        <taxon>Staphylococcaceae</taxon>
        <taxon>Staphylococcus</taxon>
    </lineage>
</organism>
<accession>P68822</accession>
<accession>Q9Z5C3</accession>
<keyword id="KW-0963">Cytoplasm</keyword>
<keyword id="KW-0312">Gluconeogenesis</keyword>
<keyword id="KW-0324">Glycolysis</keyword>
<keyword id="KW-0413">Isomerase</keyword>
<gene>
    <name evidence="1" type="primary">tpiA</name>
    <name type="synonym">tpi</name>
    <name type="ordered locus">SAV0774</name>
</gene>
<feature type="chain" id="PRO_0000090284" description="Triosephosphate isomerase">
    <location>
        <begin position="1"/>
        <end position="253"/>
    </location>
</feature>
<feature type="active site" description="Electrophile" evidence="1">
    <location>
        <position position="97"/>
    </location>
</feature>
<feature type="active site" description="Proton acceptor" evidence="1">
    <location>
        <position position="169"/>
    </location>
</feature>
<feature type="binding site" evidence="1">
    <location>
        <begin position="9"/>
        <end position="11"/>
    </location>
    <ligand>
        <name>substrate</name>
    </ligand>
</feature>
<feature type="binding site" evidence="1">
    <location>
        <position position="175"/>
    </location>
    <ligand>
        <name>substrate</name>
    </ligand>
</feature>
<feature type="binding site" evidence="1">
    <location>
        <position position="215"/>
    </location>
    <ligand>
        <name>substrate</name>
    </ligand>
</feature>
<feature type="binding site" evidence="1">
    <location>
        <begin position="236"/>
        <end position="237"/>
    </location>
    <ligand>
        <name>substrate</name>
    </ligand>
</feature>
<name>TPIS_STAAM</name>
<comment type="function">
    <text evidence="1">Involved in the gluconeogenesis. Catalyzes stereospecifically the conversion of dihydroxyacetone phosphate (DHAP) to D-glyceraldehyde-3-phosphate (G3P).</text>
</comment>
<comment type="catalytic activity">
    <reaction evidence="1">
        <text>D-glyceraldehyde 3-phosphate = dihydroxyacetone phosphate</text>
        <dbReference type="Rhea" id="RHEA:18585"/>
        <dbReference type="ChEBI" id="CHEBI:57642"/>
        <dbReference type="ChEBI" id="CHEBI:59776"/>
        <dbReference type="EC" id="5.3.1.1"/>
    </reaction>
</comment>
<comment type="pathway">
    <text evidence="1">Carbohydrate biosynthesis; gluconeogenesis.</text>
</comment>
<comment type="pathway">
    <text evidence="1">Carbohydrate degradation; glycolysis; D-glyceraldehyde 3-phosphate from glycerone phosphate: step 1/1.</text>
</comment>
<comment type="subunit">
    <text evidence="1">Homodimer.</text>
</comment>
<comment type="subcellular location">
    <subcellularLocation>
        <location evidence="1">Cytoplasm</location>
    </subcellularLocation>
</comment>
<comment type="similarity">
    <text evidence="1">Belongs to the triosephosphate isomerase family.</text>
</comment>
<evidence type="ECO:0000255" key="1">
    <source>
        <dbReference type="HAMAP-Rule" id="MF_00147"/>
    </source>
</evidence>
<proteinExistence type="inferred from homology"/>
<reference key="1">
    <citation type="journal article" date="2001" name="Lancet">
        <title>Whole genome sequencing of meticillin-resistant Staphylococcus aureus.</title>
        <authorList>
            <person name="Kuroda M."/>
            <person name="Ohta T."/>
            <person name="Uchiyama I."/>
            <person name="Baba T."/>
            <person name="Yuzawa H."/>
            <person name="Kobayashi I."/>
            <person name="Cui L."/>
            <person name="Oguchi A."/>
            <person name="Aoki K."/>
            <person name="Nagai Y."/>
            <person name="Lian J.-Q."/>
            <person name="Ito T."/>
            <person name="Kanamori M."/>
            <person name="Matsumaru H."/>
            <person name="Maruyama A."/>
            <person name="Murakami H."/>
            <person name="Hosoyama A."/>
            <person name="Mizutani-Ui Y."/>
            <person name="Takahashi N.K."/>
            <person name="Sawano T."/>
            <person name="Inoue R."/>
            <person name="Kaito C."/>
            <person name="Sekimizu K."/>
            <person name="Hirakawa H."/>
            <person name="Kuhara S."/>
            <person name="Goto S."/>
            <person name="Yabuzaki J."/>
            <person name="Kanehisa M."/>
            <person name="Yamashita A."/>
            <person name="Oshima K."/>
            <person name="Furuya K."/>
            <person name="Yoshino C."/>
            <person name="Shiba T."/>
            <person name="Hattori M."/>
            <person name="Ogasawara N."/>
            <person name="Hayashi H."/>
            <person name="Hiramatsu K."/>
        </authorList>
    </citation>
    <scope>NUCLEOTIDE SEQUENCE [LARGE SCALE GENOMIC DNA]</scope>
    <source>
        <strain>Mu50 / ATCC 700699</strain>
    </source>
</reference>
<sequence length="253" mass="27262">MRTPIIAGNWKMNKTVQEAKDFVNALPTLPDSKEVESVICAPAIQLDALTTAVKEGKAQGLEIGAQNTYFEDNGAFTGETSPVALADLGVKYVVIGHSERRELFHETDEEINKKAHAIFKHGMTPIICVGETDEERESGKANDVVGEQVKKAVAGLSEDQLKSVVIAYEPIWAIGTGKSSTSEDANEMCAFVRQTIADLSSKEVSEATRIQYGGSVKPNNIKEYMAQTDIDGALVGGASLKVEDFVQLLEGAK</sequence>